<sequence length="337" mass="34972">MRLTASAIAEQFGLTVVGDGTTEVSGVATLAHAGAGQLSFLSNPRYRPQLADTQAAVVVLRADDADAAKGTALVAKDPYTAFAKIAALFDVAPVREPGIHASAVIDPTAQVSPGAHVGPFVSIGARSRVGDGCVIGTGSIIGEDCVVDEGSELLARVTLVTRVRLGKRVRIHPGAVIGADGFGLAMDAGHWIKVPQLGGVVIGDDCEIGANTCIDRGALEDTVLEEDVRVDNLVQIAHNCRIGAHSAIAGCTGIAGSAKIGRYCLLGGHVGVVGHLEICDKVVITGKSVVRNSIHEPGEYSSGTPLTDNRTWRKNAARFKQLDVLARRILAVGKEKE</sequence>
<protein>
    <recommendedName>
        <fullName evidence="1">UDP-3-O-acylglucosamine N-acyltransferase</fullName>
        <ecNumber evidence="1">2.3.1.191</ecNumber>
    </recommendedName>
</protein>
<name>LPXD_XANE5</name>
<feature type="chain" id="PRO_0000264458" description="UDP-3-O-acylglucosamine N-acyltransferase">
    <location>
        <begin position="1"/>
        <end position="337"/>
    </location>
</feature>
<feature type="active site" description="Proton acceptor" evidence="1">
    <location>
        <position position="238"/>
    </location>
</feature>
<proteinExistence type="inferred from homology"/>
<dbReference type="EC" id="2.3.1.191" evidence="1"/>
<dbReference type="EMBL" id="AM039952">
    <property type="protein sequence ID" value="CAJ23099.1"/>
    <property type="molecule type" value="Genomic_DNA"/>
</dbReference>
<dbReference type="RefSeq" id="WP_008578280.1">
    <property type="nucleotide sequence ID" value="NZ_CP017190.1"/>
</dbReference>
<dbReference type="SMR" id="Q3BVL4"/>
<dbReference type="STRING" id="456327.BJD11_15305"/>
<dbReference type="GeneID" id="63990673"/>
<dbReference type="KEGG" id="xcv:XCV1468"/>
<dbReference type="eggNOG" id="COG1044">
    <property type="taxonomic scope" value="Bacteria"/>
</dbReference>
<dbReference type="HOGENOM" id="CLU_049865_0_1_6"/>
<dbReference type="UniPathway" id="UPA00973"/>
<dbReference type="Proteomes" id="UP000007069">
    <property type="component" value="Chromosome"/>
</dbReference>
<dbReference type="GO" id="GO:0016020">
    <property type="term" value="C:membrane"/>
    <property type="evidence" value="ECO:0007669"/>
    <property type="project" value="GOC"/>
</dbReference>
<dbReference type="GO" id="GO:0016410">
    <property type="term" value="F:N-acyltransferase activity"/>
    <property type="evidence" value="ECO:0007669"/>
    <property type="project" value="InterPro"/>
</dbReference>
<dbReference type="GO" id="GO:0009245">
    <property type="term" value="P:lipid A biosynthetic process"/>
    <property type="evidence" value="ECO:0007669"/>
    <property type="project" value="UniProtKB-UniRule"/>
</dbReference>
<dbReference type="CDD" id="cd03352">
    <property type="entry name" value="LbH_LpxD"/>
    <property type="match status" value="1"/>
</dbReference>
<dbReference type="Gene3D" id="1.20.5.170">
    <property type="match status" value="1"/>
</dbReference>
<dbReference type="Gene3D" id="2.160.10.10">
    <property type="entry name" value="Hexapeptide repeat proteins"/>
    <property type="match status" value="1"/>
</dbReference>
<dbReference type="Gene3D" id="3.40.1390.10">
    <property type="entry name" value="MurE/MurF, N-terminal domain"/>
    <property type="match status" value="1"/>
</dbReference>
<dbReference type="HAMAP" id="MF_00523">
    <property type="entry name" value="LpxD"/>
    <property type="match status" value="1"/>
</dbReference>
<dbReference type="InterPro" id="IPR001451">
    <property type="entry name" value="Hexapep"/>
</dbReference>
<dbReference type="InterPro" id="IPR007691">
    <property type="entry name" value="LpxD"/>
</dbReference>
<dbReference type="InterPro" id="IPR011004">
    <property type="entry name" value="Trimer_LpxA-like_sf"/>
</dbReference>
<dbReference type="InterPro" id="IPR020573">
    <property type="entry name" value="UDP_GlcNAc_AcTrfase_non-rep"/>
</dbReference>
<dbReference type="NCBIfam" id="TIGR01853">
    <property type="entry name" value="lipid_A_lpxD"/>
    <property type="match status" value="1"/>
</dbReference>
<dbReference type="NCBIfam" id="NF002060">
    <property type="entry name" value="PRK00892.1"/>
    <property type="match status" value="1"/>
</dbReference>
<dbReference type="PANTHER" id="PTHR43378">
    <property type="entry name" value="UDP-3-O-ACYLGLUCOSAMINE N-ACYLTRANSFERASE"/>
    <property type="match status" value="1"/>
</dbReference>
<dbReference type="PANTHER" id="PTHR43378:SF2">
    <property type="entry name" value="UDP-3-O-ACYLGLUCOSAMINE N-ACYLTRANSFERASE 1, MITOCHONDRIAL-RELATED"/>
    <property type="match status" value="1"/>
</dbReference>
<dbReference type="Pfam" id="PF00132">
    <property type="entry name" value="Hexapep"/>
    <property type="match status" value="1"/>
</dbReference>
<dbReference type="Pfam" id="PF14602">
    <property type="entry name" value="Hexapep_2"/>
    <property type="match status" value="2"/>
</dbReference>
<dbReference type="Pfam" id="PF04613">
    <property type="entry name" value="LpxD"/>
    <property type="match status" value="1"/>
</dbReference>
<dbReference type="SUPFAM" id="SSF51161">
    <property type="entry name" value="Trimeric LpxA-like enzymes"/>
    <property type="match status" value="1"/>
</dbReference>
<organism>
    <name type="scientific">Xanthomonas euvesicatoria pv. vesicatoria (strain 85-10)</name>
    <name type="common">Xanthomonas campestris pv. vesicatoria</name>
    <dbReference type="NCBI Taxonomy" id="316273"/>
    <lineage>
        <taxon>Bacteria</taxon>
        <taxon>Pseudomonadati</taxon>
        <taxon>Pseudomonadota</taxon>
        <taxon>Gammaproteobacteria</taxon>
        <taxon>Lysobacterales</taxon>
        <taxon>Lysobacteraceae</taxon>
        <taxon>Xanthomonas</taxon>
    </lineage>
</organism>
<evidence type="ECO:0000255" key="1">
    <source>
        <dbReference type="HAMAP-Rule" id="MF_00523"/>
    </source>
</evidence>
<keyword id="KW-0012">Acyltransferase</keyword>
<keyword id="KW-0441">Lipid A biosynthesis</keyword>
<keyword id="KW-0444">Lipid biosynthesis</keyword>
<keyword id="KW-0443">Lipid metabolism</keyword>
<keyword id="KW-0677">Repeat</keyword>
<keyword id="KW-0808">Transferase</keyword>
<accession>Q3BVL4</accession>
<gene>
    <name evidence="1" type="primary">lpxD</name>
    <name type="ordered locus">XCV1468</name>
</gene>
<comment type="function">
    <text evidence="1">Catalyzes the N-acylation of UDP-3-O-acylglucosamine using 3-hydroxyacyl-ACP as the acyl donor. Is involved in the biosynthesis of lipid A, a phosphorylated glycolipid that anchors the lipopolysaccharide to the outer membrane of the cell.</text>
</comment>
<comment type="catalytic activity">
    <reaction evidence="1">
        <text>a UDP-3-O-[(3R)-3-hydroxyacyl]-alpha-D-glucosamine + a (3R)-hydroxyacyl-[ACP] = a UDP-2-N,3-O-bis[(3R)-3-hydroxyacyl]-alpha-D-glucosamine + holo-[ACP] + H(+)</text>
        <dbReference type="Rhea" id="RHEA:53836"/>
        <dbReference type="Rhea" id="RHEA-COMP:9685"/>
        <dbReference type="Rhea" id="RHEA-COMP:9945"/>
        <dbReference type="ChEBI" id="CHEBI:15378"/>
        <dbReference type="ChEBI" id="CHEBI:64479"/>
        <dbReference type="ChEBI" id="CHEBI:78827"/>
        <dbReference type="ChEBI" id="CHEBI:137740"/>
        <dbReference type="ChEBI" id="CHEBI:137748"/>
        <dbReference type="EC" id="2.3.1.191"/>
    </reaction>
</comment>
<comment type="pathway">
    <text evidence="1">Bacterial outer membrane biogenesis; LPS lipid A biosynthesis.</text>
</comment>
<comment type="subunit">
    <text evidence="1">Homotrimer.</text>
</comment>
<comment type="similarity">
    <text evidence="1">Belongs to the transferase hexapeptide repeat family. LpxD subfamily.</text>
</comment>
<reference key="1">
    <citation type="journal article" date="2005" name="J. Bacteriol.">
        <title>Insights into genome plasticity and pathogenicity of the plant pathogenic Bacterium Xanthomonas campestris pv. vesicatoria revealed by the complete genome sequence.</title>
        <authorList>
            <person name="Thieme F."/>
            <person name="Koebnik R."/>
            <person name="Bekel T."/>
            <person name="Berger C."/>
            <person name="Boch J."/>
            <person name="Buettner D."/>
            <person name="Caldana C."/>
            <person name="Gaigalat L."/>
            <person name="Goesmann A."/>
            <person name="Kay S."/>
            <person name="Kirchner O."/>
            <person name="Lanz C."/>
            <person name="Linke B."/>
            <person name="McHardy A.C."/>
            <person name="Meyer F."/>
            <person name="Mittenhuber G."/>
            <person name="Nies D.H."/>
            <person name="Niesbach-Kloesgen U."/>
            <person name="Patschkowski T."/>
            <person name="Rueckert C."/>
            <person name="Rupp O."/>
            <person name="Schneiker S."/>
            <person name="Schuster S.C."/>
            <person name="Vorhoelter F.J."/>
            <person name="Weber E."/>
            <person name="Puehler A."/>
            <person name="Bonas U."/>
            <person name="Bartels D."/>
            <person name="Kaiser O."/>
        </authorList>
    </citation>
    <scope>NUCLEOTIDE SEQUENCE [LARGE SCALE GENOMIC DNA]</scope>
    <source>
        <strain>85-10</strain>
    </source>
</reference>